<reference key="1">
    <citation type="submission" date="2005-08" db="EMBL/GenBank/DDBJ databases">
        <authorList>
            <consortium name="NIH - Mammalian Gene Collection (MGC) project"/>
        </authorList>
    </citation>
    <scope>NUCLEOTIDE SEQUENCE [LARGE SCALE MRNA]</scope>
    <source>
        <strain>Crossbred X Angus</strain>
        <tissue>Ileum</tissue>
    </source>
</reference>
<name>RIDA_BOVIN</name>
<accession>Q3T114</accession>
<comment type="function">
    <text evidence="1">Catalyzes the hydrolytic deamination of enamine/imine intermediates that form during the course of normal metabolism. May facilitate the release of ammonia from these potentially toxic reactive metabolites, reducing their impact on cellular components. It may act on enamine/imine intermediates formed by several types of pyridoxal-5'-phosphate-dependent dehydratases including L-threonine dehydratase.</text>
</comment>
<comment type="function">
    <text evidence="1">Also promotes endoribonucleolytic cleavage of some transcripts by promoting recruitment of the ribonuclease P/MRP complex. Acts by bridging YTHDF2 and the ribonuclease P/MRP complex. RIDA/HRSP12 binds to N6-methyladenosine (m6A)-containing mRNAs containing a 5'-GGUUC-3' motif: cooperative binding of RIDA/HRSP12 and YTHDF2 to such transcripts lead to recruitment of the ribonuclease P/MRP complex and subsequent endoribonucleolytic cleavage.</text>
</comment>
<comment type="catalytic activity">
    <reaction evidence="1">
        <text>2-iminobutanoate + H2O = 2-oxobutanoate + NH4(+)</text>
        <dbReference type="Rhea" id="RHEA:39975"/>
        <dbReference type="ChEBI" id="CHEBI:15377"/>
        <dbReference type="ChEBI" id="CHEBI:16763"/>
        <dbReference type="ChEBI" id="CHEBI:28938"/>
        <dbReference type="ChEBI" id="CHEBI:76545"/>
        <dbReference type="EC" id="3.5.99.10"/>
    </reaction>
</comment>
<comment type="catalytic activity">
    <reaction evidence="1">
        <text>2-iminopropanoate + H2O = pyruvate + NH4(+)</text>
        <dbReference type="Rhea" id="RHEA:40671"/>
        <dbReference type="ChEBI" id="CHEBI:15361"/>
        <dbReference type="ChEBI" id="CHEBI:15377"/>
        <dbReference type="ChEBI" id="CHEBI:28938"/>
        <dbReference type="ChEBI" id="CHEBI:44400"/>
        <dbReference type="EC" id="3.5.99.10"/>
    </reaction>
</comment>
<comment type="subunit">
    <text evidence="1">Homotrimer. Interacts with YTHDF2.</text>
</comment>
<comment type="subcellular location">
    <subcellularLocation>
        <location evidence="1">Cytoplasm</location>
    </subcellularLocation>
    <subcellularLocation>
        <location evidence="1">Nucleus</location>
    </subcellularLocation>
    <subcellularLocation>
        <location evidence="2">Peroxisome</location>
    </subcellularLocation>
    <subcellularLocation>
        <location evidence="2">Mitochondrion</location>
    </subcellularLocation>
    <text evidence="1">Mostly cytoplasmic but, in less differentiated cells occasionally nuclear.</text>
</comment>
<comment type="similarity">
    <text evidence="5">Belongs to the RutC family.</text>
</comment>
<gene>
    <name evidence="1" type="primary">RIDA</name>
</gene>
<organism>
    <name type="scientific">Bos taurus</name>
    <name type="common">Bovine</name>
    <dbReference type="NCBI Taxonomy" id="9913"/>
    <lineage>
        <taxon>Eukaryota</taxon>
        <taxon>Metazoa</taxon>
        <taxon>Chordata</taxon>
        <taxon>Craniata</taxon>
        <taxon>Vertebrata</taxon>
        <taxon>Euteleostomi</taxon>
        <taxon>Mammalia</taxon>
        <taxon>Eutheria</taxon>
        <taxon>Laurasiatheria</taxon>
        <taxon>Artiodactyla</taxon>
        <taxon>Ruminantia</taxon>
        <taxon>Pecora</taxon>
        <taxon>Bovidae</taxon>
        <taxon>Bovinae</taxon>
        <taxon>Bos</taxon>
    </lineage>
</organism>
<protein>
    <recommendedName>
        <fullName evidence="1">2-iminobutanoate/2-iminopropanoate deaminase</fullName>
        <ecNumber evidence="1">3.5.99.10</ecNumber>
    </recommendedName>
    <alternativeName>
        <fullName evidence="2">Translation inhibitor L-PSP ribonuclease</fullName>
        <ecNumber evidence="2">3.1.-.-</ecNumber>
    </alternativeName>
</protein>
<feature type="initiator methionine" description="Removed" evidence="4">
    <location>
        <position position="1"/>
    </location>
</feature>
<feature type="chain" id="PRO_0000245864" description="2-iminobutanoate/2-iminopropanoate deaminase">
    <location>
        <begin position="2"/>
        <end position="137"/>
    </location>
</feature>
<feature type="modified residue" description="N-acetylserine" evidence="4">
    <location>
        <position position="2"/>
    </location>
</feature>
<feature type="modified residue" description="N6-succinyllysine" evidence="3">
    <location>
        <position position="13"/>
    </location>
</feature>
<feature type="modified residue" description="N6-succinyllysine" evidence="3">
    <location>
        <position position="67"/>
    </location>
</feature>
<feature type="modified residue" description="Phosphothreonine" evidence="1">
    <location>
        <position position="74"/>
    </location>
</feature>
<feature type="modified residue" description="Phosphoserine" evidence="1">
    <location>
        <position position="136"/>
    </location>
</feature>
<proteinExistence type="evidence at transcript level"/>
<keyword id="KW-0007">Acetylation</keyword>
<keyword id="KW-0963">Cytoplasm</keyword>
<keyword id="KW-0378">Hydrolase</keyword>
<keyword id="KW-0443">Lipid metabolism</keyword>
<keyword id="KW-0496">Mitochondrion</keyword>
<keyword id="KW-0539">Nucleus</keyword>
<keyword id="KW-0576">Peroxisome</keyword>
<keyword id="KW-0597">Phosphoprotein</keyword>
<keyword id="KW-1185">Reference proteome</keyword>
<keyword id="KW-0694">RNA-binding</keyword>
<dbReference type="EC" id="3.5.99.10" evidence="1"/>
<dbReference type="EC" id="3.1.-.-" evidence="2"/>
<dbReference type="EMBL" id="BC102164">
    <property type="protein sequence ID" value="AAI02165.1"/>
    <property type="molecule type" value="mRNA"/>
</dbReference>
<dbReference type="RefSeq" id="NP_001029380.1">
    <property type="nucleotide sequence ID" value="NM_001034208.2"/>
</dbReference>
<dbReference type="SMR" id="Q3T114"/>
<dbReference type="FunCoup" id="Q3T114">
    <property type="interactions" value="1576"/>
</dbReference>
<dbReference type="STRING" id="9913.ENSBTAP00000016718"/>
<dbReference type="PaxDb" id="9913-ENSBTAP00000016718"/>
<dbReference type="PeptideAtlas" id="Q3T114"/>
<dbReference type="Ensembl" id="ENSBTAT00000016718.5">
    <property type="protein sequence ID" value="ENSBTAP00000016718.4"/>
    <property type="gene ID" value="ENSBTAG00000012595.5"/>
</dbReference>
<dbReference type="GeneID" id="504390"/>
<dbReference type="KEGG" id="bta:504390"/>
<dbReference type="CTD" id="10247"/>
<dbReference type="VEuPathDB" id="HostDB:ENSBTAG00000012595"/>
<dbReference type="VGNC" id="VGNC:33964">
    <property type="gene designation" value="RIDA"/>
</dbReference>
<dbReference type="eggNOG" id="KOG2317">
    <property type="taxonomic scope" value="Eukaryota"/>
</dbReference>
<dbReference type="GeneTree" id="ENSGT00420000029792"/>
<dbReference type="HOGENOM" id="CLU_100715_7_1_1"/>
<dbReference type="InParanoid" id="Q3T114"/>
<dbReference type="OMA" id="GSYFKEP"/>
<dbReference type="OrthoDB" id="309640at2759"/>
<dbReference type="TreeFam" id="TF105775"/>
<dbReference type="Reactome" id="R-BTA-8849175">
    <property type="pathway name" value="Threonine catabolism"/>
</dbReference>
<dbReference type="Proteomes" id="UP000009136">
    <property type="component" value="Chromosome 14"/>
</dbReference>
<dbReference type="Bgee" id="ENSBTAG00000012595">
    <property type="expression patterns" value="Expressed in monocyte and 103 other cell types or tissues"/>
</dbReference>
<dbReference type="GO" id="GO:0005829">
    <property type="term" value="C:cytosol"/>
    <property type="evidence" value="ECO:0000318"/>
    <property type="project" value="GO_Central"/>
</dbReference>
<dbReference type="GO" id="GO:0005759">
    <property type="term" value="C:mitochondrial matrix"/>
    <property type="evidence" value="ECO:0000250"/>
    <property type="project" value="UniProtKB"/>
</dbReference>
<dbReference type="GO" id="GO:0005739">
    <property type="term" value="C:mitochondrion"/>
    <property type="evidence" value="ECO:0000318"/>
    <property type="project" value="GO_Central"/>
</dbReference>
<dbReference type="GO" id="GO:0005634">
    <property type="term" value="C:nucleus"/>
    <property type="evidence" value="ECO:0007669"/>
    <property type="project" value="UniProtKB-SubCell"/>
</dbReference>
<dbReference type="GO" id="GO:0005777">
    <property type="term" value="C:peroxisome"/>
    <property type="evidence" value="ECO:0000250"/>
    <property type="project" value="UniProtKB"/>
</dbReference>
<dbReference type="GO" id="GO:0120242">
    <property type="term" value="F:2-iminobutanoate deaminase activity"/>
    <property type="evidence" value="ECO:0007669"/>
    <property type="project" value="RHEA"/>
</dbReference>
<dbReference type="GO" id="GO:0120243">
    <property type="term" value="F:2-iminopropanoate deaminase activity"/>
    <property type="evidence" value="ECO:0007669"/>
    <property type="project" value="RHEA"/>
</dbReference>
<dbReference type="GO" id="GO:0019239">
    <property type="term" value="F:deaminase activity"/>
    <property type="evidence" value="ECO:0000318"/>
    <property type="project" value="GO_Central"/>
</dbReference>
<dbReference type="GO" id="GO:0003729">
    <property type="term" value="F:mRNA binding"/>
    <property type="evidence" value="ECO:0000250"/>
    <property type="project" value="UniProtKB"/>
</dbReference>
<dbReference type="GO" id="GO:0016892">
    <property type="term" value="F:RNA endonuclease activity, producing 3'-phosphomonoesters"/>
    <property type="evidence" value="ECO:0000250"/>
    <property type="project" value="UniProtKB"/>
</dbReference>
<dbReference type="GO" id="GO:0006629">
    <property type="term" value="P:lipid metabolic process"/>
    <property type="evidence" value="ECO:0007669"/>
    <property type="project" value="UniProtKB-KW"/>
</dbReference>
<dbReference type="GO" id="GO:0006402">
    <property type="term" value="P:mRNA catabolic process"/>
    <property type="evidence" value="ECO:0000250"/>
    <property type="project" value="UniProtKB"/>
</dbReference>
<dbReference type="GO" id="GO:0061157">
    <property type="term" value="P:mRNA destabilization"/>
    <property type="evidence" value="ECO:0000250"/>
    <property type="project" value="UniProtKB"/>
</dbReference>
<dbReference type="GO" id="GO:0017148">
    <property type="term" value="P:negative regulation of translation"/>
    <property type="evidence" value="ECO:0000250"/>
    <property type="project" value="UniProtKB"/>
</dbReference>
<dbReference type="CDD" id="cd00448">
    <property type="entry name" value="YjgF_YER057c_UK114_family"/>
    <property type="match status" value="1"/>
</dbReference>
<dbReference type="FunFam" id="3.30.1330.40:FF:000008">
    <property type="entry name" value="ribonuclease UK114 isoform X2"/>
    <property type="match status" value="1"/>
</dbReference>
<dbReference type="Gene3D" id="3.30.1330.40">
    <property type="entry name" value="RutC-like"/>
    <property type="match status" value="1"/>
</dbReference>
<dbReference type="InterPro" id="IPR006056">
    <property type="entry name" value="RidA"/>
</dbReference>
<dbReference type="InterPro" id="IPR019897">
    <property type="entry name" value="RidA_CS"/>
</dbReference>
<dbReference type="InterPro" id="IPR035959">
    <property type="entry name" value="RutC-like_sf"/>
</dbReference>
<dbReference type="InterPro" id="IPR006175">
    <property type="entry name" value="YjgF/YER057c/UK114"/>
</dbReference>
<dbReference type="NCBIfam" id="TIGR00004">
    <property type="entry name" value="Rid family detoxifying hydrolase"/>
    <property type="match status" value="1"/>
</dbReference>
<dbReference type="PANTHER" id="PTHR11803">
    <property type="entry name" value="2-IMINOBUTANOATE/2-IMINOPROPANOATE DEAMINASE RIDA"/>
    <property type="match status" value="1"/>
</dbReference>
<dbReference type="PANTHER" id="PTHR11803:SF53">
    <property type="entry name" value="2-IMINOBUTANOATE_2-IMINOPROPANOATE DEAMINASE"/>
    <property type="match status" value="1"/>
</dbReference>
<dbReference type="Pfam" id="PF01042">
    <property type="entry name" value="Ribonuc_L-PSP"/>
    <property type="match status" value="1"/>
</dbReference>
<dbReference type="SUPFAM" id="SSF55298">
    <property type="entry name" value="YjgF-like"/>
    <property type="match status" value="1"/>
</dbReference>
<dbReference type="PROSITE" id="PS01094">
    <property type="entry name" value="UPF0076"/>
    <property type="match status" value="1"/>
</dbReference>
<evidence type="ECO:0000250" key="1">
    <source>
        <dbReference type="UniProtKB" id="P52758"/>
    </source>
</evidence>
<evidence type="ECO:0000250" key="2">
    <source>
        <dbReference type="UniProtKB" id="P52759"/>
    </source>
</evidence>
<evidence type="ECO:0000250" key="3">
    <source>
        <dbReference type="UniProtKB" id="P52760"/>
    </source>
</evidence>
<evidence type="ECO:0000250" key="4">
    <source>
        <dbReference type="UniProtKB" id="P80601"/>
    </source>
</evidence>
<evidence type="ECO:0000305" key="5"/>
<sequence length="137" mass="14272">MSSLVRKIISTAKAPAAIGPYSQAVLVDRTIYISGQLGMDPASGQLVPGGVAEEAKQALTNIGEILKAAGCDFTNVVKATVLLADINDFSTVNDVYKQYFQSSFPARAAYQVAALPKGGRVEIEAIAVQGPLTTASL</sequence>